<sequence length="860" mass="97236">MQEQYRPEEIESKVQLHWDEKRTFEVTEDESKEKYYCLSMLPYPSGRLHMGHVRNYTIGDVIARYQRMLGKNVLQPIGWDAFGLPAEGAAVKNNTAPAPWTYDNIAYMKNQLKMLGFGYDWSRELATCTPEYYRWEQKFFTELYKKGLVYKKTSAVNWCPNDQTVLANEQVIDGCCWRCDTKVERKEIPQWFIKITAYADELLNDLDKLDHWPDTVKTMQRNWIGRSEGVEITFNVNDYDNTLTVYTTRPDTFMGCTYLAVAAGHPLAQKAAENNPELAAFIDECRNTKVAEAEMATMEKKGVDTGFKAVHPLTGEEIPVWAANFVLMEYGTGAVMAVPGHDQRDYEFASKYGLNIKPVILAADGSEPDLSQQALTEKGVLFNSGEFNGLDHEAAFNAIADKLTAMGVGERKVNYRLRDWGVSRQRYWGAPIPMVTLEDGTVMPTPDDQLPVILPEDVVMDGITSPIKADPEWAKTTVNGMPALRETDTFDTFMESSWYYARYTCPEYKEGMLDSEAANYWLPVDIYIGGIEHAIMHLLYFRFFHKLMRDAGMVNSDEPAKQLLCQGMVLADAFYYVGENGERNWVSPVDAIVERDEKGRIVKAKDAAGHELVYTGMSKMSKSKNNGIDPQVMVERYGADTVRLFMMFASPADMTLEWQESGVEGANRFLKRVWKLVYEHTAKGDVAALNVDALTEDQKALRRDVHKTIAKVTDDIGRRQTFNTAIAAIMELMNKLAKAPTDGEQDRALMQEALLAVVRMLNPFTPHICFTLWQELKGEGDIDNAPWPVADEKAMVEDSTLVVVQVNGKVRAKITVPVDATEEQVRERAGQEHLVAKYLDGVTVRKVIYVPGKLLNLVVG</sequence>
<name>SYL_ECO8A</name>
<dbReference type="EC" id="6.1.1.4" evidence="1"/>
<dbReference type="EMBL" id="CU928160">
    <property type="protein sequence ID" value="CAQ97496.1"/>
    <property type="molecule type" value="Genomic_DNA"/>
</dbReference>
<dbReference type="RefSeq" id="WP_001157890.1">
    <property type="nucleotide sequence ID" value="NC_011741.1"/>
</dbReference>
<dbReference type="SMR" id="B7M5G9"/>
<dbReference type="GeneID" id="75204997"/>
<dbReference type="KEGG" id="ecr:ECIAI1_0626"/>
<dbReference type="HOGENOM" id="CLU_004427_0_0_6"/>
<dbReference type="GO" id="GO:0005829">
    <property type="term" value="C:cytosol"/>
    <property type="evidence" value="ECO:0007669"/>
    <property type="project" value="TreeGrafter"/>
</dbReference>
<dbReference type="GO" id="GO:0002161">
    <property type="term" value="F:aminoacyl-tRNA deacylase activity"/>
    <property type="evidence" value="ECO:0007669"/>
    <property type="project" value="InterPro"/>
</dbReference>
<dbReference type="GO" id="GO:0005524">
    <property type="term" value="F:ATP binding"/>
    <property type="evidence" value="ECO:0007669"/>
    <property type="project" value="UniProtKB-UniRule"/>
</dbReference>
<dbReference type="GO" id="GO:0004823">
    <property type="term" value="F:leucine-tRNA ligase activity"/>
    <property type="evidence" value="ECO:0007669"/>
    <property type="project" value="UniProtKB-UniRule"/>
</dbReference>
<dbReference type="GO" id="GO:0006429">
    <property type="term" value="P:leucyl-tRNA aminoacylation"/>
    <property type="evidence" value="ECO:0007669"/>
    <property type="project" value="UniProtKB-UniRule"/>
</dbReference>
<dbReference type="CDD" id="cd07958">
    <property type="entry name" value="Anticodon_Ia_Leu_BEm"/>
    <property type="match status" value="1"/>
</dbReference>
<dbReference type="CDD" id="cd00812">
    <property type="entry name" value="LeuRS_core"/>
    <property type="match status" value="1"/>
</dbReference>
<dbReference type="FunFam" id="1.10.730.10:FF:000002">
    <property type="entry name" value="Leucine--tRNA ligase"/>
    <property type="match status" value="2"/>
</dbReference>
<dbReference type="FunFam" id="2.20.28.290:FF:000001">
    <property type="entry name" value="Leucine--tRNA ligase"/>
    <property type="match status" value="1"/>
</dbReference>
<dbReference type="FunFam" id="3.10.20.590:FF:000001">
    <property type="entry name" value="Leucine--tRNA ligase"/>
    <property type="match status" value="1"/>
</dbReference>
<dbReference type="FunFam" id="3.40.50.620:FF:000003">
    <property type="entry name" value="Leucine--tRNA ligase"/>
    <property type="match status" value="1"/>
</dbReference>
<dbReference type="FunFam" id="3.40.50.620:FF:000124">
    <property type="entry name" value="Leucine--tRNA ligase"/>
    <property type="match status" value="1"/>
</dbReference>
<dbReference type="FunFam" id="3.90.740.10:FF:000012">
    <property type="entry name" value="Leucine--tRNA ligase"/>
    <property type="match status" value="1"/>
</dbReference>
<dbReference type="Gene3D" id="2.20.28.290">
    <property type="match status" value="1"/>
</dbReference>
<dbReference type="Gene3D" id="3.10.20.590">
    <property type="match status" value="1"/>
</dbReference>
<dbReference type="Gene3D" id="3.40.50.620">
    <property type="entry name" value="HUPs"/>
    <property type="match status" value="2"/>
</dbReference>
<dbReference type="Gene3D" id="1.10.730.10">
    <property type="entry name" value="Isoleucyl-tRNA Synthetase, Domain 1"/>
    <property type="match status" value="2"/>
</dbReference>
<dbReference type="HAMAP" id="MF_00049_B">
    <property type="entry name" value="Leu_tRNA_synth_B"/>
    <property type="match status" value="1"/>
</dbReference>
<dbReference type="InterPro" id="IPR001412">
    <property type="entry name" value="aa-tRNA-synth_I_CS"/>
</dbReference>
<dbReference type="InterPro" id="IPR002300">
    <property type="entry name" value="aa-tRNA-synth_Ia"/>
</dbReference>
<dbReference type="InterPro" id="IPR002302">
    <property type="entry name" value="Leu-tRNA-ligase"/>
</dbReference>
<dbReference type="InterPro" id="IPR025709">
    <property type="entry name" value="Leu_tRNA-synth_edit"/>
</dbReference>
<dbReference type="InterPro" id="IPR013155">
    <property type="entry name" value="M/V/L/I-tRNA-synth_anticd-bd"/>
</dbReference>
<dbReference type="InterPro" id="IPR015413">
    <property type="entry name" value="Methionyl/Leucyl_tRNA_Synth"/>
</dbReference>
<dbReference type="InterPro" id="IPR014729">
    <property type="entry name" value="Rossmann-like_a/b/a_fold"/>
</dbReference>
<dbReference type="InterPro" id="IPR009080">
    <property type="entry name" value="tRNAsynth_Ia_anticodon-bd"/>
</dbReference>
<dbReference type="InterPro" id="IPR009008">
    <property type="entry name" value="Val/Leu/Ile-tRNA-synth_edit"/>
</dbReference>
<dbReference type="NCBIfam" id="TIGR00396">
    <property type="entry name" value="leuS_bact"/>
    <property type="match status" value="1"/>
</dbReference>
<dbReference type="PANTHER" id="PTHR43740:SF2">
    <property type="entry name" value="LEUCINE--TRNA LIGASE, MITOCHONDRIAL"/>
    <property type="match status" value="1"/>
</dbReference>
<dbReference type="PANTHER" id="PTHR43740">
    <property type="entry name" value="LEUCYL-TRNA SYNTHETASE"/>
    <property type="match status" value="1"/>
</dbReference>
<dbReference type="Pfam" id="PF08264">
    <property type="entry name" value="Anticodon_1"/>
    <property type="match status" value="1"/>
</dbReference>
<dbReference type="Pfam" id="PF00133">
    <property type="entry name" value="tRNA-synt_1"/>
    <property type="match status" value="2"/>
</dbReference>
<dbReference type="Pfam" id="PF13603">
    <property type="entry name" value="tRNA-synt_1_2"/>
    <property type="match status" value="1"/>
</dbReference>
<dbReference type="Pfam" id="PF09334">
    <property type="entry name" value="tRNA-synt_1g"/>
    <property type="match status" value="1"/>
</dbReference>
<dbReference type="PRINTS" id="PR00985">
    <property type="entry name" value="TRNASYNTHLEU"/>
</dbReference>
<dbReference type="SUPFAM" id="SSF47323">
    <property type="entry name" value="Anticodon-binding domain of a subclass of class I aminoacyl-tRNA synthetases"/>
    <property type="match status" value="1"/>
</dbReference>
<dbReference type="SUPFAM" id="SSF52374">
    <property type="entry name" value="Nucleotidylyl transferase"/>
    <property type="match status" value="1"/>
</dbReference>
<dbReference type="SUPFAM" id="SSF50677">
    <property type="entry name" value="ValRS/IleRS/LeuRS editing domain"/>
    <property type="match status" value="1"/>
</dbReference>
<dbReference type="PROSITE" id="PS00178">
    <property type="entry name" value="AA_TRNA_LIGASE_I"/>
    <property type="match status" value="1"/>
</dbReference>
<evidence type="ECO:0000255" key="1">
    <source>
        <dbReference type="HAMAP-Rule" id="MF_00049"/>
    </source>
</evidence>
<organism>
    <name type="scientific">Escherichia coli O8 (strain IAI1)</name>
    <dbReference type="NCBI Taxonomy" id="585034"/>
    <lineage>
        <taxon>Bacteria</taxon>
        <taxon>Pseudomonadati</taxon>
        <taxon>Pseudomonadota</taxon>
        <taxon>Gammaproteobacteria</taxon>
        <taxon>Enterobacterales</taxon>
        <taxon>Enterobacteriaceae</taxon>
        <taxon>Escherichia</taxon>
    </lineage>
</organism>
<reference key="1">
    <citation type="journal article" date="2009" name="PLoS Genet.">
        <title>Organised genome dynamics in the Escherichia coli species results in highly diverse adaptive paths.</title>
        <authorList>
            <person name="Touchon M."/>
            <person name="Hoede C."/>
            <person name="Tenaillon O."/>
            <person name="Barbe V."/>
            <person name="Baeriswyl S."/>
            <person name="Bidet P."/>
            <person name="Bingen E."/>
            <person name="Bonacorsi S."/>
            <person name="Bouchier C."/>
            <person name="Bouvet O."/>
            <person name="Calteau A."/>
            <person name="Chiapello H."/>
            <person name="Clermont O."/>
            <person name="Cruveiller S."/>
            <person name="Danchin A."/>
            <person name="Diard M."/>
            <person name="Dossat C."/>
            <person name="Karoui M.E."/>
            <person name="Frapy E."/>
            <person name="Garry L."/>
            <person name="Ghigo J.M."/>
            <person name="Gilles A.M."/>
            <person name="Johnson J."/>
            <person name="Le Bouguenec C."/>
            <person name="Lescat M."/>
            <person name="Mangenot S."/>
            <person name="Martinez-Jehanne V."/>
            <person name="Matic I."/>
            <person name="Nassif X."/>
            <person name="Oztas S."/>
            <person name="Petit M.A."/>
            <person name="Pichon C."/>
            <person name="Rouy Z."/>
            <person name="Ruf C.S."/>
            <person name="Schneider D."/>
            <person name="Tourret J."/>
            <person name="Vacherie B."/>
            <person name="Vallenet D."/>
            <person name="Medigue C."/>
            <person name="Rocha E.P.C."/>
            <person name="Denamur E."/>
        </authorList>
    </citation>
    <scope>NUCLEOTIDE SEQUENCE [LARGE SCALE GENOMIC DNA]</scope>
    <source>
        <strain>IAI1</strain>
    </source>
</reference>
<proteinExistence type="inferred from homology"/>
<feature type="chain" id="PRO_1000199205" description="Leucine--tRNA ligase">
    <location>
        <begin position="1"/>
        <end position="860"/>
    </location>
</feature>
<feature type="short sequence motif" description="'HIGH' region">
    <location>
        <begin position="42"/>
        <end position="52"/>
    </location>
</feature>
<feature type="short sequence motif" description="'KMSKS' region">
    <location>
        <begin position="619"/>
        <end position="623"/>
    </location>
</feature>
<feature type="binding site" evidence="1">
    <location>
        <position position="622"/>
    </location>
    <ligand>
        <name>ATP</name>
        <dbReference type="ChEBI" id="CHEBI:30616"/>
    </ligand>
</feature>
<gene>
    <name evidence="1" type="primary">leuS</name>
    <name type="ordered locus">ECIAI1_0626</name>
</gene>
<accession>B7M5G9</accession>
<keyword id="KW-0030">Aminoacyl-tRNA synthetase</keyword>
<keyword id="KW-0067">ATP-binding</keyword>
<keyword id="KW-0963">Cytoplasm</keyword>
<keyword id="KW-0436">Ligase</keyword>
<keyword id="KW-0547">Nucleotide-binding</keyword>
<keyword id="KW-0648">Protein biosynthesis</keyword>
<protein>
    <recommendedName>
        <fullName evidence="1">Leucine--tRNA ligase</fullName>
        <ecNumber evidence="1">6.1.1.4</ecNumber>
    </recommendedName>
    <alternativeName>
        <fullName evidence="1">Leucyl-tRNA synthetase</fullName>
        <shortName evidence="1">LeuRS</shortName>
    </alternativeName>
</protein>
<comment type="catalytic activity">
    <reaction evidence="1">
        <text>tRNA(Leu) + L-leucine + ATP = L-leucyl-tRNA(Leu) + AMP + diphosphate</text>
        <dbReference type="Rhea" id="RHEA:11688"/>
        <dbReference type="Rhea" id="RHEA-COMP:9613"/>
        <dbReference type="Rhea" id="RHEA-COMP:9622"/>
        <dbReference type="ChEBI" id="CHEBI:30616"/>
        <dbReference type="ChEBI" id="CHEBI:33019"/>
        <dbReference type="ChEBI" id="CHEBI:57427"/>
        <dbReference type="ChEBI" id="CHEBI:78442"/>
        <dbReference type="ChEBI" id="CHEBI:78494"/>
        <dbReference type="ChEBI" id="CHEBI:456215"/>
        <dbReference type="EC" id="6.1.1.4"/>
    </reaction>
</comment>
<comment type="subcellular location">
    <subcellularLocation>
        <location evidence="1">Cytoplasm</location>
    </subcellularLocation>
</comment>
<comment type="similarity">
    <text evidence="1">Belongs to the class-I aminoacyl-tRNA synthetase family.</text>
</comment>